<name>SELA_SALDC</name>
<sequence length="463" mass="50814">MTSETRTLYSQLPAIDRLLHDSAFLSLRDRYGHTQVVDLLRRMLDDARDVIRNTQTLPDWYADWAQEAKLRLENAAQSALRPVINLTGTVLHTNLGRALQAQEAVEAVTQAMRAPVTLEYDLDGAGRGHRDRALATLLCRITGAEDACIVNNNAAAVLLMLAATASGKEVVVSRGELVEIGGAFRIPDVMRQAGCTLHEVGTTNRTHAKDYRQAVNENTGLLMKVHTSNYSIEGFTKTVEEAELAEIGRELDIPVVADLGSGSLVDLSQYGLPKEPMPQQLIAAGVSLVSFSGDKLLGGPQAGIIVGKKAMIAQLQSHPLKRALRADKMTLAALEATLRLYLHPEALAEKLPTLRLLTRSEASIREQAQRLQARLAARYGDEFALEVKPCLSQIGSGSLPVDRLPSAAMTFTPHDGRGSRLEALAARWRTLPVPVIGRIYDGRLWLDMRCLEDESRFMEMMLK</sequence>
<organism>
    <name type="scientific">Salmonella dublin (strain CT_02021853)</name>
    <dbReference type="NCBI Taxonomy" id="439851"/>
    <lineage>
        <taxon>Bacteria</taxon>
        <taxon>Pseudomonadati</taxon>
        <taxon>Pseudomonadota</taxon>
        <taxon>Gammaproteobacteria</taxon>
        <taxon>Enterobacterales</taxon>
        <taxon>Enterobacteriaceae</taxon>
        <taxon>Salmonella</taxon>
    </lineage>
</organism>
<protein>
    <recommendedName>
        <fullName evidence="1">L-seryl-tRNA(Sec) selenium transferase</fullName>
        <ecNumber evidence="1">2.9.1.1</ecNumber>
    </recommendedName>
    <alternativeName>
        <fullName evidence="1">Selenocysteine synthase</fullName>
        <shortName evidence="1">Sec synthase</shortName>
    </alternativeName>
    <alternativeName>
        <fullName evidence="1">Selenocysteinyl-tRNA(Sec) synthase</fullName>
    </alternativeName>
</protein>
<evidence type="ECO:0000255" key="1">
    <source>
        <dbReference type="HAMAP-Rule" id="MF_00423"/>
    </source>
</evidence>
<gene>
    <name evidence="1" type="primary">selA</name>
    <name type="ordered locus">SeD_A4068</name>
</gene>
<feature type="chain" id="PRO_1000124151" description="L-seryl-tRNA(Sec) selenium transferase">
    <location>
        <begin position="1"/>
        <end position="463"/>
    </location>
</feature>
<feature type="modified residue" description="N6-(pyridoxal phosphate)lysine" evidence="1">
    <location>
        <position position="295"/>
    </location>
</feature>
<reference key="1">
    <citation type="journal article" date="2011" name="J. Bacteriol.">
        <title>Comparative genomics of 28 Salmonella enterica isolates: evidence for CRISPR-mediated adaptive sublineage evolution.</title>
        <authorList>
            <person name="Fricke W.F."/>
            <person name="Mammel M.K."/>
            <person name="McDermott P.F."/>
            <person name="Tartera C."/>
            <person name="White D.G."/>
            <person name="Leclerc J.E."/>
            <person name="Ravel J."/>
            <person name="Cebula T.A."/>
        </authorList>
    </citation>
    <scope>NUCLEOTIDE SEQUENCE [LARGE SCALE GENOMIC DNA]</scope>
    <source>
        <strain>CT_02021853</strain>
    </source>
</reference>
<dbReference type="EC" id="2.9.1.1" evidence="1"/>
<dbReference type="EMBL" id="CP001144">
    <property type="protein sequence ID" value="ACH75153.1"/>
    <property type="molecule type" value="Genomic_DNA"/>
</dbReference>
<dbReference type="RefSeq" id="WP_000200194.1">
    <property type="nucleotide sequence ID" value="NC_011205.1"/>
</dbReference>
<dbReference type="SMR" id="B5FLG0"/>
<dbReference type="KEGG" id="sed:SeD_A4068"/>
<dbReference type="HOGENOM" id="CLU_038142_1_0_6"/>
<dbReference type="UniPathway" id="UPA00906">
    <property type="reaction ID" value="UER00896"/>
</dbReference>
<dbReference type="Proteomes" id="UP000008322">
    <property type="component" value="Chromosome"/>
</dbReference>
<dbReference type="GO" id="GO:0005737">
    <property type="term" value="C:cytoplasm"/>
    <property type="evidence" value="ECO:0007669"/>
    <property type="project" value="UniProtKB-SubCell"/>
</dbReference>
<dbReference type="GO" id="GO:0004125">
    <property type="term" value="F:L-seryl-tRNA(Sec) selenium transferase activity"/>
    <property type="evidence" value="ECO:0007669"/>
    <property type="project" value="UniProtKB-UniRule"/>
</dbReference>
<dbReference type="GO" id="GO:0001717">
    <property type="term" value="P:conversion of seryl-tRNAsec to selenocys-tRNAsec"/>
    <property type="evidence" value="ECO:0007669"/>
    <property type="project" value="UniProtKB-UniRule"/>
</dbReference>
<dbReference type="GO" id="GO:0001514">
    <property type="term" value="P:selenocysteine incorporation"/>
    <property type="evidence" value="ECO:0007669"/>
    <property type="project" value="UniProtKB-UniRule"/>
</dbReference>
<dbReference type="FunFam" id="3.40.640.10:FF:000028">
    <property type="entry name" value="L-seryl-tRNA(Sec) selenium transferase"/>
    <property type="match status" value="1"/>
</dbReference>
<dbReference type="FunFam" id="3.90.1150.180:FF:000001">
    <property type="entry name" value="L-seryl-tRNA(Sec) selenium transferase"/>
    <property type="match status" value="1"/>
</dbReference>
<dbReference type="Gene3D" id="3.90.1150.180">
    <property type="match status" value="1"/>
</dbReference>
<dbReference type="Gene3D" id="3.40.640.10">
    <property type="entry name" value="Type I PLP-dependent aspartate aminotransferase-like (Major domain)"/>
    <property type="match status" value="1"/>
</dbReference>
<dbReference type="HAMAP" id="MF_00423">
    <property type="entry name" value="SelA"/>
    <property type="match status" value="1"/>
</dbReference>
<dbReference type="InterPro" id="IPR015424">
    <property type="entry name" value="PyrdxlP-dep_Trfase"/>
</dbReference>
<dbReference type="InterPro" id="IPR015421">
    <property type="entry name" value="PyrdxlP-dep_Trfase_major"/>
</dbReference>
<dbReference type="InterPro" id="IPR018319">
    <property type="entry name" value="SelA-like"/>
</dbReference>
<dbReference type="InterPro" id="IPR004534">
    <property type="entry name" value="SelA_trans"/>
</dbReference>
<dbReference type="InterPro" id="IPR025862">
    <property type="entry name" value="SelA_trans_N_dom"/>
</dbReference>
<dbReference type="NCBIfam" id="TIGR00474">
    <property type="entry name" value="selA"/>
    <property type="match status" value="1"/>
</dbReference>
<dbReference type="PANTHER" id="PTHR32328">
    <property type="entry name" value="L-SERYL-TRNA(SEC) SELENIUM TRANSFERASE"/>
    <property type="match status" value="1"/>
</dbReference>
<dbReference type="PANTHER" id="PTHR32328:SF0">
    <property type="entry name" value="L-SERYL-TRNA(SEC) SELENIUM TRANSFERASE"/>
    <property type="match status" value="1"/>
</dbReference>
<dbReference type="Pfam" id="PF12390">
    <property type="entry name" value="Se-cys_synth_N"/>
    <property type="match status" value="1"/>
</dbReference>
<dbReference type="Pfam" id="PF03841">
    <property type="entry name" value="SelA"/>
    <property type="match status" value="1"/>
</dbReference>
<dbReference type="SUPFAM" id="SSF53383">
    <property type="entry name" value="PLP-dependent transferases"/>
    <property type="match status" value="1"/>
</dbReference>
<accession>B5FLG0</accession>
<comment type="function">
    <text evidence="1">Converts seryl-tRNA(Sec) to selenocysteinyl-tRNA(Sec) required for selenoprotein biosynthesis.</text>
</comment>
<comment type="catalytic activity">
    <reaction evidence="1">
        <text>L-seryl-tRNA(Sec) + selenophosphate + H(+) = L-selenocysteinyl-tRNA(Sec) + phosphate</text>
        <dbReference type="Rhea" id="RHEA:22728"/>
        <dbReference type="Rhea" id="RHEA-COMP:9742"/>
        <dbReference type="Rhea" id="RHEA-COMP:9743"/>
        <dbReference type="ChEBI" id="CHEBI:15378"/>
        <dbReference type="ChEBI" id="CHEBI:16144"/>
        <dbReference type="ChEBI" id="CHEBI:43474"/>
        <dbReference type="ChEBI" id="CHEBI:78533"/>
        <dbReference type="ChEBI" id="CHEBI:78573"/>
        <dbReference type="EC" id="2.9.1.1"/>
    </reaction>
</comment>
<comment type="cofactor">
    <cofactor evidence="1">
        <name>pyridoxal 5'-phosphate</name>
        <dbReference type="ChEBI" id="CHEBI:597326"/>
    </cofactor>
</comment>
<comment type="pathway">
    <text evidence="1">Aminoacyl-tRNA biosynthesis; selenocysteinyl-tRNA(Sec) biosynthesis; selenocysteinyl-tRNA(Sec) from L-seryl-tRNA(Sec) (bacterial route): step 1/1.</text>
</comment>
<comment type="subunit">
    <text evidence="1">Homodecamer; pentamer of dimers. Binds only one seryl-tRNA(Sec) per dimer.</text>
</comment>
<comment type="subcellular location">
    <subcellularLocation>
        <location evidence="1">Cytoplasm</location>
    </subcellularLocation>
</comment>
<comment type="similarity">
    <text evidence="1">Belongs to the SelA family.</text>
</comment>
<keyword id="KW-0963">Cytoplasm</keyword>
<keyword id="KW-0648">Protein biosynthesis</keyword>
<keyword id="KW-0663">Pyridoxal phosphate</keyword>
<keyword id="KW-0711">Selenium</keyword>
<keyword id="KW-0808">Transferase</keyword>
<proteinExistence type="inferred from homology"/>